<name>ACE3_MOUSE</name>
<accession>D0G895</accession>
<gene>
    <name evidence="8" type="primary">Ace3</name>
</gene>
<organism evidence="7">
    <name type="scientific">Mus musculus</name>
    <name type="common">Mouse</name>
    <dbReference type="NCBI Taxonomy" id="10090"/>
    <lineage>
        <taxon>Eukaryota</taxon>
        <taxon>Metazoa</taxon>
        <taxon>Chordata</taxon>
        <taxon>Craniata</taxon>
        <taxon>Vertebrata</taxon>
        <taxon>Euteleostomi</taxon>
        <taxon>Mammalia</taxon>
        <taxon>Eutheria</taxon>
        <taxon>Euarchontoglires</taxon>
        <taxon>Glires</taxon>
        <taxon>Rodentia</taxon>
        <taxon>Myomorpha</taxon>
        <taxon>Muroidea</taxon>
        <taxon>Muridae</taxon>
        <taxon>Murinae</taxon>
        <taxon>Mus</taxon>
        <taxon>Mus</taxon>
    </lineage>
</organism>
<dbReference type="EMBL" id="AB531024">
    <property type="protein sequence ID" value="BAI48788.1"/>
    <property type="molecule type" value="mRNA"/>
</dbReference>
<dbReference type="EMBL" id="AL596331">
    <property type="status" value="NOT_ANNOTATED_CDS"/>
    <property type="molecule type" value="Genomic_DNA"/>
</dbReference>
<dbReference type="CCDS" id="CCDS59570.1"/>
<dbReference type="RefSeq" id="NP_001094923.2">
    <property type="nucleotide sequence ID" value="NM_001101453.3"/>
</dbReference>
<dbReference type="SMR" id="D0G895"/>
<dbReference type="FunCoup" id="D0G895">
    <property type="interactions" value="65"/>
</dbReference>
<dbReference type="STRING" id="10090.ENSMUSP00000140827"/>
<dbReference type="MEROPS" id="M02.971"/>
<dbReference type="GlyCosmos" id="D0G895">
    <property type="glycosylation" value="1 site, No reported glycans"/>
</dbReference>
<dbReference type="GlyGen" id="D0G895">
    <property type="glycosylation" value="2 sites, 1 O-linked glycan (1 site)"/>
</dbReference>
<dbReference type="iPTMnet" id="D0G895"/>
<dbReference type="PhosphoSitePlus" id="D0G895"/>
<dbReference type="jPOST" id="D0G895"/>
<dbReference type="PaxDb" id="10090-ENSMUSP00000140827"/>
<dbReference type="PeptideAtlas" id="D0G895"/>
<dbReference type="ProteomicsDB" id="285579"/>
<dbReference type="DNASU" id="217246"/>
<dbReference type="Ensembl" id="ENSMUST00000190995.2">
    <property type="protein sequence ID" value="ENSMUSP00000140827.2"/>
    <property type="gene ID" value="ENSMUSG00000101605.2"/>
</dbReference>
<dbReference type="GeneID" id="217246"/>
<dbReference type="KEGG" id="mmu:217246"/>
<dbReference type="UCSC" id="uc011ygg.2">
    <property type="organism name" value="mouse"/>
</dbReference>
<dbReference type="AGR" id="MGI:3644400"/>
<dbReference type="CTD" id="217246"/>
<dbReference type="MGI" id="MGI:3644400">
    <property type="gene designation" value="Ace3"/>
</dbReference>
<dbReference type="VEuPathDB" id="HostDB:ENSMUSG00000101605"/>
<dbReference type="eggNOG" id="KOG3690">
    <property type="taxonomic scope" value="Eukaryota"/>
</dbReference>
<dbReference type="GeneTree" id="ENSGT00940000163921"/>
<dbReference type="HOGENOM" id="CLU_014364_3_0_1"/>
<dbReference type="InParanoid" id="D0G895"/>
<dbReference type="OMA" id="VYYHNYM"/>
<dbReference type="OrthoDB" id="10029630at2759"/>
<dbReference type="PhylomeDB" id="D0G895"/>
<dbReference type="BioGRID-ORCS" id="217246">
    <property type="hits" value="3 hits in 73 CRISPR screens"/>
</dbReference>
<dbReference type="PRO" id="PR:D0G895"/>
<dbReference type="Proteomes" id="UP000000589">
    <property type="component" value="Chromosome 11"/>
</dbReference>
<dbReference type="RNAct" id="D0G895">
    <property type="molecule type" value="protein"/>
</dbReference>
<dbReference type="Bgee" id="ENSMUSG00000101605">
    <property type="expression patterns" value="Expressed in spermatid and 4 other cell types or tissues"/>
</dbReference>
<dbReference type="GO" id="GO:0002080">
    <property type="term" value="C:acrosomal membrane"/>
    <property type="evidence" value="ECO:0007669"/>
    <property type="project" value="UniProtKB-SubCell"/>
</dbReference>
<dbReference type="GO" id="GO:0001669">
    <property type="term" value="C:acrosomal vesicle"/>
    <property type="evidence" value="ECO:0000314"/>
    <property type="project" value="MGI"/>
</dbReference>
<dbReference type="GO" id="GO:0046872">
    <property type="term" value="F:metal ion binding"/>
    <property type="evidence" value="ECO:0007669"/>
    <property type="project" value="UniProtKB-KW"/>
</dbReference>
<dbReference type="GO" id="GO:0008237">
    <property type="term" value="F:metallopeptidase activity"/>
    <property type="evidence" value="ECO:0007669"/>
    <property type="project" value="InterPro"/>
</dbReference>
<dbReference type="GO" id="GO:0008241">
    <property type="term" value="F:peptidyl-dipeptidase activity"/>
    <property type="evidence" value="ECO:0007669"/>
    <property type="project" value="InterPro"/>
</dbReference>
<dbReference type="GO" id="GO:0006508">
    <property type="term" value="P:proteolysis"/>
    <property type="evidence" value="ECO:0007669"/>
    <property type="project" value="InterPro"/>
</dbReference>
<dbReference type="CDD" id="cd06461">
    <property type="entry name" value="M2_ACE"/>
    <property type="match status" value="1"/>
</dbReference>
<dbReference type="InterPro" id="IPR001548">
    <property type="entry name" value="Peptidase_M2"/>
</dbReference>
<dbReference type="PANTHER" id="PTHR10514">
    <property type="entry name" value="ANGIOTENSIN-CONVERTING ENZYME"/>
    <property type="match status" value="1"/>
</dbReference>
<dbReference type="PANTHER" id="PTHR10514:SF41">
    <property type="entry name" value="ANGIOTENSIN-CONVERTING ENZYME-LIKE PROTEIN ACE3"/>
    <property type="match status" value="1"/>
</dbReference>
<dbReference type="Pfam" id="PF01401">
    <property type="entry name" value="Peptidase_M2"/>
    <property type="match status" value="1"/>
</dbReference>
<dbReference type="PRINTS" id="PR00791">
    <property type="entry name" value="PEPDIPTASEA"/>
</dbReference>
<dbReference type="SUPFAM" id="SSF55486">
    <property type="entry name" value="Metalloproteases ('zincins'), catalytic domain"/>
    <property type="match status" value="1"/>
</dbReference>
<dbReference type="PROSITE" id="PS52011">
    <property type="entry name" value="PEPTIDASE_M2"/>
    <property type="match status" value="1"/>
</dbReference>
<protein>
    <recommendedName>
        <fullName evidence="6">Angiotensin-converting enzyme-like protein Ace3</fullName>
    </recommendedName>
</protein>
<feature type="signal peptide" evidence="1">
    <location>
        <begin position="1"/>
        <end position="23"/>
    </location>
</feature>
<feature type="chain" id="PRO_5008952182" description="Angiotensin-converting enzyme-like protein Ace3">
    <location>
        <begin position="24"/>
        <end position="737"/>
    </location>
</feature>
<feature type="topological domain" description="Extracellular" evidence="6">
    <location>
        <begin position="24"/>
        <end position="639"/>
    </location>
</feature>
<feature type="transmembrane region" description="Helical" evidence="1">
    <location>
        <begin position="640"/>
        <end position="660"/>
    </location>
</feature>
<feature type="topological domain" description="Cytoplasmic" evidence="6">
    <location>
        <begin position="661"/>
        <end position="700"/>
    </location>
</feature>
<feature type="transmembrane region" description="Helical" evidence="1">
    <location>
        <begin position="701"/>
        <end position="721"/>
    </location>
</feature>
<feature type="topological domain" description="Extracellular" evidence="6">
    <location>
        <begin position="722"/>
        <end position="737"/>
    </location>
</feature>
<feature type="domain" description="Peptidase M2" evidence="2">
    <location>
        <begin position="32"/>
        <end position="611"/>
    </location>
</feature>
<feature type="binding site" evidence="2">
    <location>
        <position position="180"/>
    </location>
    <ligand>
        <name>chloride</name>
        <dbReference type="ChEBI" id="CHEBI:17996"/>
        <label>1</label>
    </ligand>
</feature>
<feature type="binding site" evidence="2">
    <location>
        <position position="218"/>
    </location>
    <ligand>
        <name>chloride</name>
        <dbReference type="ChEBI" id="CHEBI:17996"/>
        <label>2</label>
    </ligand>
</feature>
<feature type="binding site" evidence="2">
    <location>
        <position position="377"/>
    </location>
    <ligand>
        <name>Zn(2+)</name>
        <dbReference type="ChEBI" id="CHEBI:29105"/>
        <note>catalytic</note>
    </ligand>
</feature>
<feature type="binding site" evidence="2">
    <location>
        <position position="381"/>
    </location>
    <ligand>
        <name>Zn(2+)</name>
        <dbReference type="ChEBI" id="CHEBI:29105"/>
        <note>catalytic</note>
    </ligand>
</feature>
<feature type="binding site" evidence="2">
    <location>
        <position position="405"/>
    </location>
    <ligand>
        <name>Zn(2+)</name>
        <dbReference type="ChEBI" id="CHEBI:29105"/>
        <note>catalytic</note>
    </ligand>
</feature>
<feature type="binding site" evidence="2">
    <location>
        <position position="479"/>
    </location>
    <ligand>
        <name>chloride</name>
        <dbReference type="ChEBI" id="CHEBI:17996"/>
        <label>1</label>
    </ligand>
</feature>
<feature type="binding site" evidence="2">
    <location>
        <position position="483"/>
    </location>
    <ligand>
        <name>chloride</name>
        <dbReference type="ChEBI" id="CHEBI:17996"/>
        <label>1</label>
    </ligand>
</feature>
<feature type="binding site" evidence="2">
    <location>
        <position position="516"/>
    </location>
    <ligand>
        <name>chloride</name>
        <dbReference type="ChEBI" id="CHEBI:17996"/>
        <label>2</label>
    </ligand>
</feature>
<feature type="glycosylation site" description="N-linked (GlcNAc...) asparagine" evidence="1">
    <location>
        <position position="390"/>
    </location>
</feature>
<feature type="disulfide bond" evidence="2">
    <location>
        <begin position="146"/>
        <end position="152"/>
    </location>
</feature>
<feature type="disulfide bond" evidence="2">
    <location>
        <begin position="346"/>
        <end position="364"/>
    </location>
</feature>
<feature type="disulfide bond" evidence="2">
    <location>
        <begin position="532"/>
        <end position="544"/>
    </location>
</feature>
<proteinExistence type="evidence at protein level"/>
<reference evidence="7" key="1">
    <citation type="journal article" date="2010" name="PLoS ONE">
        <title>Identification and disruption of sperm-specific angiotensin converting enzyme-3 (ACE3) in mouse.</title>
        <authorList>
            <person name="Inoue N."/>
            <person name="Kasahara T."/>
            <person name="Ikawa M."/>
            <person name="Okabe M."/>
        </authorList>
    </citation>
    <scope>NUCLEOTIDE SEQUENCE [MRNA]</scope>
    <scope>INTERACTION WITH IZUMO1</scope>
    <scope>SUBCELLULAR LOCATION</scope>
    <scope>TISSUE SPECIFICITY</scope>
    <scope>IDENTIFICATION BY MASS SPECTROMETRY</scope>
    <scope>DISRUPTION PHENOTYPE</scope>
    <source>
        <tissue evidence="7">Testis</tissue>
    </source>
</reference>
<reference evidence="9" key="2">
    <citation type="journal article" date="2009" name="PLoS Biol.">
        <title>Lineage-specific biology revealed by a finished genome assembly of the mouse.</title>
        <authorList>
            <person name="Church D.M."/>
            <person name="Goodstadt L."/>
            <person name="Hillier L.W."/>
            <person name="Zody M.C."/>
            <person name="Goldstein S."/>
            <person name="She X."/>
            <person name="Bult C.J."/>
            <person name="Agarwala R."/>
            <person name="Cherry J.L."/>
            <person name="DiCuccio M."/>
            <person name="Hlavina W."/>
            <person name="Kapustin Y."/>
            <person name="Meric P."/>
            <person name="Maglott D."/>
            <person name="Birtle Z."/>
            <person name="Marques A.C."/>
            <person name="Graves T."/>
            <person name="Zhou S."/>
            <person name="Teague B."/>
            <person name="Potamousis K."/>
            <person name="Churas C."/>
            <person name="Place M."/>
            <person name="Herschleb J."/>
            <person name="Runnheim R."/>
            <person name="Forrest D."/>
            <person name="Amos-Landgraf J."/>
            <person name="Schwartz D.C."/>
            <person name="Cheng Z."/>
            <person name="Lindblad-Toh K."/>
            <person name="Eichler E.E."/>
            <person name="Ponting C.P."/>
        </authorList>
    </citation>
    <scope>NUCLEOTIDE SEQUENCE [LARGE SCALE GENOMIC DNA]</scope>
    <source>
        <strain evidence="9">C57BL/6J</strain>
    </source>
</reference>
<reference evidence="6" key="3">
    <citation type="journal article" date="2007" name="BMC Genomics">
        <title>Identification and characterisation of the angiotensin converting enzyme-3 (ACE3) gene: a novel mammalian homologue of ACE.</title>
        <authorList>
            <person name="Rella M."/>
            <person name="Elliot J.L."/>
            <person name="Revett T.J."/>
            <person name="Lanfear J."/>
            <person name="Phelan A."/>
            <person name="Jackson R.M."/>
            <person name="Turner A.J."/>
            <person name="Hooper N.M."/>
        </authorList>
    </citation>
    <scope>TISSUE SPECIFICITY</scope>
</reference>
<reference key="4">
    <citation type="journal article" date="2022" name="Sci. Adv.">
        <title>C11orf94/Frey is a key regulator for male fertility by controlling Izumo1 complex assembly.</title>
        <authorList>
            <person name="Contreras W."/>
            <person name="Wiesehoefer C."/>
            <person name="Schreier D."/>
            <person name="Leinung N."/>
            <person name="Peche P."/>
            <person name="Wennemuth G."/>
            <person name="Gentzel M."/>
            <person name="Schroeder B."/>
            <person name="Mentrup T."/>
        </authorList>
    </citation>
    <scope>INTERACTION WITH IZUMO1</scope>
</reference>
<evidence type="ECO:0000255" key="1"/>
<evidence type="ECO:0000255" key="2">
    <source>
        <dbReference type="PROSITE-ProRule" id="PRU01355"/>
    </source>
</evidence>
<evidence type="ECO:0000269" key="3">
    <source>
    </source>
</evidence>
<evidence type="ECO:0000269" key="4">
    <source>
    </source>
</evidence>
<evidence type="ECO:0000269" key="5">
    <source>
    </source>
</evidence>
<evidence type="ECO:0000305" key="6"/>
<evidence type="ECO:0000312" key="7">
    <source>
        <dbReference type="EMBL" id="BAI48788.1"/>
    </source>
</evidence>
<evidence type="ECO:0000312" key="8">
    <source>
        <dbReference type="MGI" id="MGI:3644400"/>
    </source>
</evidence>
<evidence type="ECO:0000312" key="9">
    <source>
        <dbReference type="Proteomes" id="UP000000589"/>
    </source>
</evidence>
<sequence length="737" mass="85874">MNLPWALLLVLLSHRQLLPWLRTVGETSLNDFYSEAQAKLFLQFYEQTAQVVLNEFMEATWNYVTNITKQNQKNMLQKEADRSQFMLYFSTRARMFRTDHFLNQDVKRMLRKLQNIDKSALPTEDLLEYNRLLTYMETAYNRAEVCLDEGPCLTLEPDLQEIMATSRDQKELLWAWQGWRDAVGRQLRPVFEDYVRLSNKAAQYNGYKDMGALWRSKYESDTLEEDLEQLYKELQPLYLNLHAYVRRSLYRYYGPELIDLRGPIPAHLLGNMWAQSWNNILDLVLPYPTKAPEDITAIMKIQHWRPEKMFEEANLFFTSMGMLPAPPAFWIKSMMEKPADGREVECHTSSWNFYKFNDFRVKKCTEVTLEDLLSVFHQMGHIQYFLQYQNLSVIYQEGASPAFEEAVGSVIALSVSSHKYLLARGLLSQPHQDSEEEVNFLLGIALEKIAFIPFSYLVDKFRWKIFDGTISKITYNQEWWNFRLKYQGLCPPVPRSDDDFDPGAKFHIPANVPYIRYFLGLILQFQLHEALCEASGHVGPLHQCDNYNSKVAGKILGDLLKLGSSRPWREVLQEVTGESNISTKAFLTYFKPLMDWLVTENVKQGDTLGWPDFSCSFEEKITSKVSFLGTDTEPEQAYLGQWVLLSMSFFMLVLILALGFRLHYLEKQLLDEDTMILKTLPYSYFLGIAMEPHQAARKQWLLLGLCCILMLCCIGLLIRIVTQNTENTPWMKNEGQS</sequence>
<comment type="cofactor">
    <cofactor evidence="2">
        <name>Zn(2+)</name>
        <dbReference type="ChEBI" id="CHEBI:29105"/>
    </cofactor>
</comment>
<comment type="subunit">
    <text evidence="4 5">Interacts with IZUMO1.</text>
</comment>
<comment type="subcellular location">
    <subcellularLocation>
        <location evidence="4">Cytoplasmic vesicle</location>
        <location evidence="4">Secretory vesicle</location>
        <location evidence="4">Acrosome membrane</location>
        <topology evidence="1">Multi-pass membrane protein</topology>
    </subcellularLocation>
    <text evidence="4">Disappears from acrosome reacted sperm. Co-localizes with IZUMO1 at acrosomal cap area.</text>
</comment>
<comment type="tissue specificity">
    <text evidence="3 4">Expressed in sperm and testis (at protein level) (PubMed:20421979). Expressed in heart and testis (PubMed:17597519). Not detected in kidney, lung, liver, brain, ovary, spleen and thymus (PubMed:17597519, PubMed:20421979).</text>
</comment>
<comment type="disruption phenotype">
    <text evidence="4">No visible phenotype. Sperm have normal fertilizing ability.</text>
</comment>
<comment type="similarity">
    <text evidence="6">Belongs to the peptidase M2 family.</text>
</comment>
<comment type="caution">
    <text evidence="6">Lacks the conserved Glu residue in position 378 necessary for the catalytic activity.</text>
</comment>
<keyword id="KW-0968">Cytoplasmic vesicle</keyword>
<keyword id="KW-1015">Disulfide bond</keyword>
<keyword id="KW-0325">Glycoprotein</keyword>
<keyword id="KW-0472">Membrane</keyword>
<keyword id="KW-0479">Metal-binding</keyword>
<keyword id="KW-1185">Reference proteome</keyword>
<keyword id="KW-0732">Signal</keyword>
<keyword id="KW-0812">Transmembrane</keyword>
<keyword id="KW-1133">Transmembrane helix</keyword>
<keyword id="KW-0862">Zinc</keyword>